<organism>
    <name type="scientific">Ureaplasma parvum serovar 3 (strain ATCC 700970)</name>
    <dbReference type="NCBI Taxonomy" id="273119"/>
    <lineage>
        <taxon>Bacteria</taxon>
        <taxon>Bacillati</taxon>
        <taxon>Mycoplasmatota</taxon>
        <taxon>Mycoplasmoidales</taxon>
        <taxon>Mycoplasmoidaceae</taxon>
        <taxon>Ureaplasma</taxon>
    </lineage>
</organism>
<evidence type="ECO:0000250" key="1"/>
<evidence type="ECO:0000255" key="2">
    <source>
        <dbReference type="PROSITE-ProRule" id="PRU00258"/>
    </source>
</evidence>
<evidence type="ECO:0000305" key="3"/>
<proteinExistence type="inferred from homology"/>
<dbReference type="EMBL" id="AF222894">
    <property type="protein sequence ID" value="AAF30918.1"/>
    <property type="molecule type" value="Genomic_DNA"/>
</dbReference>
<dbReference type="RefSeq" id="WP_006688580.1">
    <property type="nucleotide sequence ID" value="NC_002162.1"/>
</dbReference>
<dbReference type="SMR" id="Q9PPY4"/>
<dbReference type="STRING" id="273119.UU506"/>
<dbReference type="EnsemblBacteria" id="AAF30918">
    <property type="protein sequence ID" value="AAF30918"/>
    <property type="gene ID" value="UU506"/>
</dbReference>
<dbReference type="GeneID" id="29672350"/>
<dbReference type="KEGG" id="uur:UU506"/>
<dbReference type="eggNOG" id="COG0236">
    <property type="taxonomic scope" value="Bacteria"/>
</dbReference>
<dbReference type="HOGENOM" id="CLU_108696_5_3_14"/>
<dbReference type="OrthoDB" id="404077at2"/>
<dbReference type="UniPathway" id="UPA00094"/>
<dbReference type="Proteomes" id="UP000000423">
    <property type="component" value="Chromosome"/>
</dbReference>
<dbReference type="GO" id="GO:0006633">
    <property type="term" value="P:fatty acid biosynthetic process"/>
    <property type="evidence" value="ECO:0007669"/>
    <property type="project" value="UniProtKB-UniPathway"/>
</dbReference>
<dbReference type="Gene3D" id="1.10.1200.10">
    <property type="entry name" value="ACP-like"/>
    <property type="match status" value="1"/>
</dbReference>
<dbReference type="InterPro" id="IPR036736">
    <property type="entry name" value="ACP-like_sf"/>
</dbReference>
<dbReference type="InterPro" id="IPR009081">
    <property type="entry name" value="PP-bd_ACP"/>
</dbReference>
<dbReference type="InterPro" id="IPR006162">
    <property type="entry name" value="Ppantetheine_attach_site"/>
</dbReference>
<dbReference type="Pfam" id="PF00550">
    <property type="entry name" value="PP-binding"/>
    <property type="match status" value="1"/>
</dbReference>
<dbReference type="SUPFAM" id="SSF47336">
    <property type="entry name" value="ACP-like"/>
    <property type="match status" value="1"/>
</dbReference>
<dbReference type="PROSITE" id="PS50075">
    <property type="entry name" value="CARRIER"/>
    <property type="match status" value="1"/>
</dbReference>
<dbReference type="PROSITE" id="PS00012">
    <property type="entry name" value="PHOSPHOPANTETHEINE"/>
    <property type="match status" value="1"/>
</dbReference>
<name>ACPH_UREPA</name>
<comment type="function">
    <text evidence="1">Carrier of the growing fatty acid chain in fatty acid biosynthesis.</text>
</comment>
<comment type="pathway">
    <text>Lipid metabolism; fatty acid biosynthesis.</text>
</comment>
<comment type="PTM">
    <text evidence="3">4'-phosphopantetheine is transferred from CoA to a specific serine of the apo-ACP-like protein.</text>
</comment>
<keyword id="KW-0275">Fatty acid biosynthesis</keyword>
<keyword id="KW-0276">Fatty acid metabolism</keyword>
<keyword id="KW-0444">Lipid biosynthesis</keyword>
<keyword id="KW-0443">Lipid metabolism</keyword>
<keyword id="KW-0596">Phosphopantetheine</keyword>
<keyword id="KW-0597">Phosphoprotein</keyword>
<keyword id="KW-1185">Reference proteome</keyword>
<gene>
    <name type="ordered locus">UU506</name>
</gene>
<protein>
    <recommendedName>
        <fullName>Acyl carrier protein homolog</fullName>
        <shortName>ACP</shortName>
    </recommendedName>
</protein>
<accession>Q9PPY4</accession>
<sequence length="77" mass="8750">MSINIKDLIMKIAKENKIALNMDNLNIELKSLGIDSLSAMNLIMKIEDQIGVQLPDEKLLKIKNLRDLINAFEDVLK</sequence>
<reference key="1">
    <citation type="journal article" date="2000" name="Nature">
        <title>The complete sequence of the mucosal pathogen Ureaplasma urealyticum.</title>
        <authorList>
            <person name="Glass J.I."/>
            <person name="Lefkowitz E.J."/>
            <person name="Glass J.S."/>
            <person name="Heiner C.R."/>
            <person name="Chen E.Y."/>
            <person name="Cassell G.H."/>
        </authorList>
    </citation>
    <scope>NUCLEOTIDE SEQUENCE [LARGE SCALE GENOMIC DNA]</scope>
    <source>
        <strain>ATCC 700970</strain>
    </source>
</reference>
<feature type="chain" id="PRO_0000180268" description="Acyl carrier protein homolog">
    <location>
        <begin position="1"/>
        <end position="77"/>
    </location>
</feature>
<feature type="domain" description="Carrier" evidence="2">
    <location>
        <begin position="1"/>
        <end position="76"/>
    </location>
</feature>
<feature type="modified residue" description="O-(pantetheine 4'-phosphoryl)serine" evidence="2">
    <location>
        <position position="36"/>
    </location>
</feature>